<gene>
    <name type="primary">PMPCA</name>
    <name type="synonym">INPP5E</name>
    <name type="synonym">KIAA0123</name>
    <name type="synonym">MPPA</name>
</gene>
<protein>
    <recommendedName>
        <fullName>Mitochondrial-processing peptidase subunit alpha</fullName>
    </recommendedName>
    <alternativeName>
        <fullName>Alpha-MPP</fullName>
    </alternativeName>
    <alternativeName>
        <fullName evidence="8">Inactive zinc metalloprotease alpha</fullName>
    </alternativeName>
    <alternativeName>
        <fullName>P-55</fullName>
    </alternativeName>
</protein>
<sequence>MAAVVLAATRLLRGSGSWGCSRLRFGPPAYRRFSSGGAYPNIPLSSPLPGVPKPVFATVDGQEKFETKVTTLDNGLRVASQNKFGQFCTVGILINSGSRYEAKYLSGIAHFLEKLAFSSTARFDSKDEILLTLEKHGGICDCQTSRDTTMYAVSADSKGLDTVVALLADVVLQPRLTDEEVEMTRMAVQFELEDLNLRPDPEPLLTEMIHEAAYRENTVGLHRFCPTENVAKINREVLHSYLRNYYTPDRMVLAGVGVEHEHLVDCARKYLLGVQPAWGSAEAVDIDRSVAQYTGGIAKLERDMSNVSLGPTPIPELTHIMVGLESCSFLEEDFIPFAVLNMMMGGGGSFSAGGPGKGMFSRLYLNVLNRHHWMYNATSYHHSYEDTGLLCIHASADPRQVREMVEIITKEFILMGGTVDTVELERAKTQLTSMLMMNLESRPVIFEDVGRQVLATRSRKLPHELCTLIRNVKPEDVKRVASKMLRGKPAVAALGDLTDLPTYEHIQTALSSKDGRLPRTYRLFR</sequence>
<proteinExistence type="evidence at protein level"/>
<keyword id="KW-0007">Acetylation</keyword>
<keyword id="KW-0025">Alternative splicing</keyword>
<keyword id="KW-0225">Disease variant</keyword>
<keyword id="KW-0991">Intellectual disability</keyword>
<keyword id="KW-0472">Membrane</keyword>
<keyword id="KW-0496">Mitochondrion</keyword>
<keyword id="KW-0999">Mitochondrion inner membrane</keyword>
<keyword id="KW-0523">Neurodegeneration</keyword>
<keyword id="KW-1267">Proteomics identification</keyword>
<keyword id="KW-1185">Reference proteome</keyword>
<keyword id="KW-0809">Transit peptide</keyword>
<dbReference type="EMBL" id="D21064">
    <property type="protein sequence ID" value="BAA04643.1"/>
    <property type="status" value="ALT_INIT"/>
    <property type="molecule type" value="mRNA"/>
</dbReference>
<dbReference type="EMBL" id="D50913">
    <property type="protein sequence ID" value="BAA09472.2"/>
    <property type="status" value="ALT_INIT"/>
    <property type="molecule type" value="mRNA"/>
</dbReference>
<dbReference type="EMBL" id="AK296617">
    <property type="protein sequence ID" value="BAG59225.1"/>
    <property type="molecule type" value="mRNA"/>
</dbReference>
<dbReference type="EMBL" id="AL592301">
    <property type="status" value="NOT_ANNOTATED_CDS"/>
    <property type="molecule type" value="Genomic_DNA"/>
</dbReference>
<dbReference type="EMBL" id="CH471090">
    <property type="protein sequence ID" value="EAW88232.1"/>
    <property type="molecule type" value="Genomic_DNA"/>
</dbReference>
<dbReference type="EMBL" id="BC022949">
    <property type="protein sequence ID" value="AAH22949.1"/>
    <property type="molecule type" value="mRNA"/>
</dbReference>
<dbReference type="EMBL" id="BC033103">
    <property type="protein sequence ID" value="AAH33103.2"/>
    <property type="status" value="ALT_INIT"/>
    <property type="molecule type" value="mRNA"/>
</dbReference>
<dbReference type="EMBL" id="BC111399">
    <property type="protein sequence ID" value="AAI11400.1"/>
    <property type="molecule type" value="mRNA"/>
</dbReference>
<dbReference type="EMBL" id="BC132724">
    <property type="protein sequence ID" value="AAI32725.1"/>
    <property type="molecule type" value="mRNA"/>
</dbReference>
<dbReference type="EMBL" id="BC136599">
    <property type="protein sequence ID" value="AAI36600.1"/>
    <property type="molecule type" value="mRNA"/>
</dbReference>
<dbReference type="CCDS" id="CCDS35180.1">
    <molecule id="Q10713-1"/>
</dbReference>
<dbReference type="RefSeq" id="NP_001269873.1">
    <molecule id="Q10713-2"/>
    <property type="nucleotide sequence ID" value="NM_001282944.2"/>
</dbReference>
<dbReference type="RefSeq" id="NP_001269875.1">
    <property type="nucleotide sequence ID" value="NM_001282946.1"/>
</dbReference>
<dbReference type="RefSeq" id="NP_055975.1">
    <molecule id="Q10713-1"/>
    <property type="nucleotide sequence ID" value="NM_015160.3"/>
</dbReference>
<dbReference type="SMR" id="Q10713"/>
<dbReference type="BioGRID" id="116811">
    <property type="interactions" value="393"/>
</dbReference>
<dbReference type="ComplexPortal" id="CPX-6243">
    <property type="entry name" value="Mitochondrial processing peptidase complex"/>
</dbReference>
<dbReference type="FunCoup" id="Q10713">
    <property type="interactions" value="2545"/>
</dbReference>
<dbReference type="IntAct" id="Q10713">
    <property type="interactions" value="76"/>
</dbReference>
<dbReference type="MINT" id="Q10713"/>
<dbReference type="STRING" id="9606.ENSP00000360782"/>
<dbReference type="ChEMBL" id="CHEMBL4295809"/>
<dbReference type="MEROPS" id="M16.971"/>
<dbReference type="MEROPS" id="M16.P01"/>
<dbReference type="GlyGen" id="Q10713">
    <property type="glycosylation" value="4 sites, 1 O-linked glycan (3 sites)"/>
</dbReference>
<dbReference type="iPTMnet" id="Q10713"/>
<dbReference type="MetOSite" id="Q10713"/>
<dbReference type="PhosphoSitePlus" id="Q10713"/>
<dbReference type="SwissPalm" id="Q10713"/>
<dbReference type="BioMuta" id="PMPCA"/>
<dbReference type="DMDM" id="29840846"/>
<dbReference type="jPOST" id="Q10713"/>
<dbReference type="MassIVE" id="Q10713"/>
<dbReference type="PaxDb" id="9606-ENSP00000360782"/>
<dbReference type="PeptideAtlas" id="Q10713"/>
<dbReference type="ProteomicsDB" id="4468"/>
<dbReference type="ProteomicsDB" id="58867">
    <molecule id="Q10713-1"/>
</dbReference>
<dbReference type="Pumba" id="Q10713"/>
<dbReference type="Antibodypedia" id="18730">
    <property type="antibodies" value="127 antibodies from 25 providers"/>
</dbReference>
<dbReference type="DNASU" id="23203"/>
<dbReference type="Ensembl" id="ENST00000371717.8">
    <molecule id="Q10713-1"/>
    <property type="protein sequence ID" value="ENSP00000360782.3"/>
    <property type="gene ID" value="ENSG00000165688.14"/>
</dbReference>
<dbReference type="Ensembl" id="ENST00000706227.1">
    <molecule id="Q10713-1"/>
    <property type="protein sequence ID" value="ENSP00000516285.1"/>
    <property type="gene ID" value="ENSG00000165688.14"/>
</dbReference>
<dbReference type="Ensembl" id="ENST00000706228.1">
    <molecule id="Q10713-1"/>
    <property type="protein sequence ID" value="ENSP00000516286.1"/>
    <property type="gene ID" value="ENSG00000165688.14"/>
</dbReference>
<dbReference type="Ensembl" id="ENST00000706375.1">
    <molecule id="Q10713-1"/>
    <property type="protein sequence ID" value="ENSP00000516357.1"/>
    <property type="gene ID" value="ENSG00000165688.14"/>
</dbReference>
<dbReference type="GeneID" id="23203"/>
<dbReference type="KEGG" id="hsa:23203"/>
<dbReference type="MANE-Select" id="ENST00000371717.8">
    <property type="protein sequence ID" value="ENSP00000360782.3"/>
    <property type="RefSeq nucleotide sequence ID" value="NM_015160.3"/>
    <property type="RefSeq protein sequence ID" value="NP_055975.1"/>
</dbReference>
<dbReference type="UCSC" id="uc004chl.5">
    <molecule id="Q10713-1"/>
    <property type="organism name" value="human"/>
</dbReference>
<dbReference type="AGR" id="HGNC:18667"/>
<dbReference type="CTD" id="23203"/>
<dbReference type="DisGeNET" id="23203"/>
<dbReference type="GeneCards" id="PMPCA"/>
<dbReference type="HGNC" id="HGNC:18667">
    <property type="gene designation" value="PMPCA"/>
</dbReference>
<dbReference type="HPA" id="ENSG00000165688">
    <property type="expression patterns" value="Low tissue specificity"/>
</dbReference>
<dbReference type="MalaCards" id="PMPCA"/>
<dbReference type="MIM" id="213200">
    <property type="type" value="phenotype"/>
</dbReference>
<dbReference type="MIM" id="613036">
    <property type="type" value="gene"/>
</dbReference>
<dbReference type="neXtProt" id="NX_Q10713"/>
<dbReference type="OpenTargets" id="ENSG00000165688"/>
<dbReference type="Orphanet" id="1170">
    <property type="disease" value="Autosomal recessive cerebelloparenchymal disorder type 3"/>
</dbReference>
<dbReference type="PharmGKB" id="PA38629"/>
<dbReference type="VEuPathDB" id="HostDB:ENSG00000165688"/>
<dbReference type="eggNOG" id="KOG2067">
    <property type="taxonomic scope" value="Eukaryota"/>
</dbReference>
<dbReference type="GeneTree" id="ENSGT00940000156724"/>
<dbReference type="HOGENOM" id="CLU_009902_5_2_1"/>
<dbReference type="InParanoid" id="Q10713"/>
<dbReference type="OMA" id="LKYHHSP"/>
<dbReference type="OrthoDB" id="277191at2759"/>
<dbReference type="PAN-GO" id="Q10713">
    <property type="GO annotations" value="2 GO annotations based on evolutionary models"/>
</dbReference>
<dbReference type="PhylomeDB" id="Q10713"/>
<dbReference type="TreeFam" id="TF105031"/>
<dbReference type="BRENDA" id="3.4.24.64">
    <property type="organism ID" value="2681"/>
</dbReference>
<dbReference type="PathwayCommons" id="Q10713"/>
<dbReference type="Reactome" id="R-HSA-1268020">
    <property type="pathway name" value="Mitochondrial protein import"/>
</dbReference>
<dbReference type="Reactome" id="R-HSA-8949664">
    <property type="pathway name" value="Processing of SMDT1"/>
</dbReference>
<dbReference type="Reactome" id="R-HSA-9837999">
    <property type="pathway name" value="Mitochondrial protein degradation"/>
</dbReference>
<dbReference type="SignaLink" id="Q10713"/>
<dbReference type="BioGRID-ORCS" id="23203">
    <property type="hits" value="767 hits in 1170 CRISPR screens"/>
</dbReference>
<dbReference type="ChiTaRS" id="PMPCA">
    <property type="organism name" value="human"/>
</dbReference>
<dbReference type="GeneWiki" id="PMPCA"/>
<dbReference type="GenomeRNAi" id="23203"/>
<dbReference type="Pharos" id="Q10713">
    <property type="development level" value="Tbio"/>
</dbReference>
<dbReference type="PRO" id="PR:Q10713"/>
<dbReference type="Proteomes" id="UP000005640">
    <property type="component" value="Chromosome 9"/>
</dbReference>
<dbReference type="RNAct" id="Q10713">
    <property type="molecule type" value="protein"/>
</dbReference>
<dbReference type="Bgee" id="ENSG00000165688">
    <property type="expression patterns" value="Expressed in right lobe of liver and 191 other cell types or tissues"/>
</dbReference>
<dbReference type="ExpressionAtlas" id="Q10713">
    <property type="expression patterns" value="baseline and differential"/>
</dbReference>
<dbReference type="GO" id="GO:0005615">
    <property type="term" value="C:extracellular space"/>
    <property type="evidence" value="ECO:0007005"/>
    <property type="project" value="UniProtKB"/>
</dbReference>
<dbReference type="GO" id="GO:0005743">
    <property type="term" value="C:mitochondrial inner membrane"/>
    <property type="evidence" value="ECO:0000314"/>
    <property type="project" value="UniProtKB"/>
</dbReference>
<dbReference type="GO" id="GO:0005759">
    <property type="term" value="C:mitochondrial matrix"/>
    <property type="evidence" value="ECO:0000304"/>
    <property type="project" value="Reactome"/>
</dbReference>
<dbReference type="GO" id="GO:0017087">
    <property type="term" value="C:mitochondrial processing peptidase complex"/>
    <property type="evidence" value="ECO:0000303"/>
    <property type="project" value="ComplexPortal"/>
</dbReference>
<dbReference type="GO" id="GO:0005739">
    <property type="term" value="C:mitochondrion"/>
    <property type="evidence" value="ECO:0000314"/>
    <property type="project" value="LIFEdb"/>
</dbReference>
<dbReference type="GO" id="GO:0046872">
    <property type="term" value="F:metal ion binding"/>
    <property type="evidence" value="ECO:0007669"/>
    <property type="project" value="InterPro"/>
</dbReference>
<dbReference type="GO" id="GO:0004222">
    <property type="term" value="F:metalloendopeptidase activity"/>
    <property type="evidence" value="ECO:0007669"/>
    <property type="project" value="InterPro"/>
</dbReference>
<dbReference type="GO" id="GO:0006627">
    <property type="term" value="P:protein processing involved in protein targeting to mitochondrion"/>
    <property type="evidence" value="ECO:0000314"/>
    <property type="project" value="UniProtKB"/>
</dbReference>
<dbReference type="FunFam" id="3.30.830.10:FF:000010">
    <property type="entry name" value="Mitochondrial-processing peptidase alpha subunit, mitochondrial"/>
    <property type="match status" value="1"/>
</dbReference>
<dbReference type="FunFam" id="3.30.830.10:FF:000014">
    <property type="entry name" value="Mitochondrial-processing peptidase alpha subunit, mitochondrial"/>
    <property type="match status" value="1"/>
</dbReference>
<dbReference type="Gene3D" id="3.30.830.10">
    <property type="entry name" value="Metalloenzyme, LuxS/M16 peptidase-like"/>
    <property type="match status" value="2"/>
</dbReference>
<dbReference type="InterPro" id="IPR011249">
    <property type="entry name" value="Metalloenz_LuxS/M16"/>
</dbReference>
<dbReference type="InterPro" id="IPR050361">
    <property type="entry name" value="MPP/UQCRC_Complex"/>
</dbReference>
<dbReference type="InterPro" id="IPR011765">
    <property type="entry name" value="Pept_M16_N"/>
</dbReference>
<dbReference type="InterPro" id="IPR001431">
    <property type="entry name" value="Pept_M16_Zn_BS"/>
</dbReference>
<dbReference type="InterPro" id="IPR007863">
    <property type="entry name" value="Peptidase_M16_C"/>
</dbReference>
<dbReference type="PANTHER" id="PTHR11851">
    <property type="entry name" value="METALLOPROTEASE"/>
    <property type="match status" value="1"/>
</dbReference>
<dbReference type="PANTHER" id="PTHR11851:SF192">
    <property type="entry name" value="MITOCHONDRIAL-PROCESSING PEPTIDASE SUBUNIT ALPHA"/>
    <property type="match status" value="1"/>
</dbReference>
<dbReference type="Pfam" id="PF00675">
    <property type="entry name" value="Peptidase_M16"/>
    <property type="match status" value="1"/>
</dbReference>
<dbReference type="Pfam" id="PF05193">
    <property type="entry name" value="Peptidase_M16_C"/>
    <property type="match status" value="1"/>
</dbReference>
<dbReference type="SUPFAM" id="SSF63411">
    <property type="entry name" value="LuxS/MPP-like metallohydrolase"/>
    <property type="match status" value="2"/>
</dbReference>
<dbReference type="PROSITE" id="PS00143">
    <property type="entry name" value="INSULINASE"/>
    <property type="match status" value="1"/>
</dbReference>
<reference key="1">
    <citation type="journal article" date="1995" name="DNA Res.">
        <title>Prediction of the coding sequences of unidentified human genes. III. The coding sequences of 40 new genes (KIAA0081-KIAA0120) deduced by analysis of cDNA clones from human cell line KG-1.</title>
        <authorList>
            <person name="Nagase T."/>
            <person name="Miyajima N."/>
            <person name="Tanaka A."/>
            <person name="Sazuka T."/>
            <person name="Seki N."/>
            <person name="Sato S."/>
            <person name="Tabata S."/>
            <person name="Ishikawa K."/>
            <person name="Kawarabayasi Y."/>
            <person name="Kotani H."/>
            <person name="Nomura N."/>
        </authorList>
    </citation>
    <scope>NUCLEOTIDE SEQUENCE [LARGE SCALE MRNA] (ISOFORM 1)</scope>
    <source>
        <tissue>Bone marrow</tissue>
    </source>
</reference>
<reference key="2">
    <citation type="journal article" date="1995" name="DNA Res.">
        <title>Prediction of the coding sequences of unidentified human genes. IV. The coding sequences of 40 new genes (KIAA0121-KIAA0160) deduced by analysis of cDNA clones from human cell line KG-1.</title>
        <authorList>
            <person name="Nagase T."/>
            <person name="Seki N."/>
            <person name="Tanaka A."/>
            <person name="Ishikawa K."/>
            <person name="Nomura N."/>
        </authorList>
    </citation>
    <scope>NUCLEOTIDE SEQUENCE [LARGE SCALE MRNA] (ISOFORM 1)</scope>
    <source>
        <tissue>Bone marrow</tissue>
    </source>
</reference>
<reference key="3">
    <citation type="journal article" date="2004" name="Nat. Genet.">
        <title>Complete sequencing and characterization of 21,243 full-length human cDNAs.</title>
        <authorList>
            <person name="Ota T."/>
            <person name="Suzuki Y."/>
            <person name="Nishikawa T."/>
            <person name="Otsuki T."/>
            <person name="Sugiyama T."/>
            <person name="Irie R."/>
            <person name="Wakamatsu A."/>
            <person name="Hayashi K."/>
            <person name="Sato H."/>
            <person name="Nagai K."/>
            <person name="Kimura K."/>
            <person name="Makita H."/>
            <person name="Sekine M."/>
            <person name="Obayashi M."/>
            <person name="Nishi T."/>
            <person name="Shibahara T."/>
            <person name="Tanaka T."/>
            <person name="Ishii S."/>
            <person name="Yamamoto J."/>
            <person name="Saito K."/>
            <person name="Kawai Y."/>
            <person name="Isono Y."/>
            <person name="Nakamura Y."/>
            <person name="Nagahari K."/>
            <person name="Murakami K."/>
            <person name="Yasuda T."/>
            <person name="Iwayanagi T."/>
            <person name="Wagatsuma M."/>
            <person name="Shiratori A."/>
            <person name="Sudo H."/>
            <person name="Hosoiri T."/>
            <person name="Kaku Y."/>
            <person name="Kodaira H."/>
            <person name="Kondo H."/>
            <person name="Sugawara M."/>
            <person name="Takahashi M."/>
            <person name="Kanda K."/>
            <person name="Yokoi T."/>
            <person name="Furuya T."/>
            <person name="Kikkawa E."/>
            <person name="Omura Y."/>
            <person name="Abe K."/>
            <person name="Kamihara K."/>
            <person name="Katsuta N."/>
            <person name="Sato K."/>
            <person name="Tanikawa M."/>
            <person name="Yamazaki M."/>
            <person name="Ninomiya K."/>
            <person name="Ishibashi T."/>
            <person name="Yamashita H."/>
            <person name="Murakawa K."/>
            <person name="Fujimori K."/>
            <person name="Tanai H."/>
            <person name="Kimata M."/>
            <person name="Watanabe M."/>
            <person name="Hiraoka S."/>
            <person name="Chiba Y."/>
            <person name="Ishida S."/>
            <person name="Ono Y."/>
            <person name="Takiguchi S."/>
            <person name="Watanabe S."/>
            <person name="Yosida M."/>
            <person name="Hotuta T."/>
            <person name="Kusano J."/>
            <person name="Kanehori K."/>
            <person name="Takahashi-Fujii A."/>
            <person name="Hara H."/>
            <person name="Tanase T.-O."/>
            <person name="Nomura Y."/>
            <person name="Togiya S."/>
            <person name="Komai F."/>
            <person name="Hara R."/>
            <person name="Takeuchi K."/>
            <person name="Arita M."/>
            <person name="Imose N."/>
            <person name="Musashino K."/>
            <person name="Yuuki H."/>
            <person name="Oshima A."/>
            <person name="Sasaki N."/>
            <person name="Aotsuka S."/>
            <person name="Yoshikawa Y."/>
            <person name="Matsunawa H."/>
            <person name="Ichihara T."/>
            <person name="Shiohata N."/>
            <person name="Sano S."/>
            <person name="Moriya S."/>
            <person name="Momiyama H."/>
            <person name="Satoh N."/>
            <person name="Takami S."/>
            <person name="Terashima Y."/>
            <person name="Suzuki O."/>
            <person name="Nakagawa S."/>
            <person name="Senoh A."/>
            <person name="Mizoguchi H."/>
            <person name="Goto Y."/>
            <person name="Shimizu F."/>
            <person name="Wakebe H."/>
            <person name="Hishigaki H."/>
            <person name="Watanabe T."/>
            <person name="Sugiyama A."/>
            <person name="Takemoto M."/>
            <person name="Kawakami B."/>
            <person name="Yamazaki M."/>
            <person name="Watanabe K."/>
            <person name="Kumagai A."/>
            <person name="Itakura S."/>
            <person name="Fukuzumi Y."/>
            <person name="Fujimori Y."/>
            <person name="Komiyama M."/>
            <person name="Tashiro H."/>
            <person name="Tanigami A."/>
            <person name="Fujiwara T."/>
            <person name="Ono T."/>
            <person name="Yamada K."/>
            <person name="Fujii Y."/>
            <person name="Ozaki K."/>
            <person name="Hirao M."/>
            <person name="Ohmori Y."/>
            <person name="Kawabata A."/>
            <person name="Hikiji T."/>
            <person name="Kobatake N."/>
            <person name="Inagaki H."/>
            <person name="Ikema Y."/>
            <person name="Okamoto S."/>
            <person name="Okitani R."/>
            <person name="Kawakami T."/>
            <person name="Noguchi S."/>
            <person name="Itoh T."/>
            <person name="Shigeta K."/>
            <person name="Senba T."/>
            <person name="Matsumura K."/>
            <person name="Nakajima Y."/>
            <person name="Mizuno T."/>
            <person name="Morinaga M."/>
            <person name="Sasaki M."/>
            <person name="Togashi T."/>
            <person name="Oyama M."/>
            <person name="Hata H."/>
            <person name="Watanabe M."/>
            <person name="Komatsu T."/>
            <person name="Mizushima-Sugano J."/>
            <person name="Satoh T."/>
            <person name="Shirai Y."/>
            <person name="Takahashi Y."/>
            <person name="Nakagawa K."/>
            <person name="Okumura K."/>
            <person name="Nagase T."/>
            <person name="Nomura N."/>
            <person name="Kikuchi H."/>
            <person name="Masuho Y."/>
            <person name="Yamashita R."/>
            <person name="Nakai K."/>
            <person name="Yada T."/>
            <person name="Nakamura Y."/>
            <person name="Ohara O."/>
            <person name="Isogai T."/>
            <person name="Sugano S."/>
        </authorList>
    </citation>
    <scope>NUCLEOTIDE SEQUENCE [LARGE SCALE MRNA] (ISOFORM 2)</scope>
    <source>
        <tissue>Colon</tissue>
    </source>
</reference>
<reference key="4">
    <citation type="journal article" date="2004" name="Nature">
        <title>DNA sequence and analysis of human chromosome 9.</title>
        <authorList>
            <person name="Humphray S.J."/>
            <person name="Oliver K."/>
            <person name="Hunt A.R."/>
            <person name="Plumb R.W."/>
            <person name="Loveland J.E."/>
            <person name="Howe K.L."/>
            <person name="Andrews T.D."/>
            <person name="Searle S."/>
            <person name="Hunt S.E."/>
            <person name="Scott C.E."/>
            <person name="Jones M.C."/>
            <person name="Ainscough R."/>
            <person name="Almeida J.P."/>
            <person name="Ambrose K.D."/>
            <person name="Ashwell R.I.S."/>
            <person name="Babbage A.K."/>
            <person name="Babbage S."/>
            <person name="Bagguley C.L."/>
            <person name="Bailey J."/>
            <person name="Banerjee R."/>
            <person name="Barker D.J."/>
            <person name="Barlow K.F."/>
            <person name="Bates K."/>
            <person name="Beasley H."/>
            <person name="Beasley O."/>
            <person name="Bird C.P."/>
            <person name="Bray-Allen S."/>
            <person name="Brown A.J."/>
            <person name="Brown J.Y."/>
            <person name="Burford D."/>
            <person name="Burrill W."/>
            <person name="Burton J."/>
            <person name="Carder C."/>
            <person name="Carter N.P."/>
            <person name="Chapman J.C."/>
            <person name="Chen Y."/>
            <person name="Clarke G."/>
            <person name="Clark S.Y."/>
            <person name="Clee C.M."/>
            <person name="Clegg S."/>
            <person name="Collier R.E."/>
            <person name="Corby N."/>
            <person name="Crosier M."/>
            <person name="Cummings A.T."/>
            <person name="Davies J."/>
            <person name="Dhami P."/>
            <person name="Dunn M."/>
            <person name="Dutta I."/>
            <person name="Dyer L.W."/>
            <person name="Earthrowl M.E."/>
            <person name="Faulkner L."/>
            <person name="Fleming C.J."/>
            <person name="Frankish A."/>
            <person name="Frankland J.A."/>
            <person name="French L."/>
            <person name="Fricker D.G."/>
            <person name="Garner P."/>
            <person name="Garnett J."/>
            <person name="Ghori J."/>
            <person name="Gilbert J.G.R."/>
            <person name="Glison C."/>
            <person name="Grafham D.V."/>
            <person name="Gribble S."/>
            <person name="Griffiths C."/>
            <person name="Griffiths-Jones S."/>
            <person name="Grocock R."/>
            <person name="Guy J."/>
            <person name="Hall R.E."/>
            <person name="Hammond S."/>
            <person name="Harley J.L."/>
            <person name="Harrison E.S.I."/>
            <person name="Hart E.A."/>
            <person name="Heath P.D."/>
            <person name="Henderson C.D."/>
            <person name="Hopkins B.L."/>
            <person name="Howard P.J."/>
            <person name="Howden P.J."/>
            <person name="Huckle E."/>
            <person name="Johnson C."/>
            <person name="Johnson D."/>
            <person name="Joy A.A."/>
            <person name="Kay M."/>
            <person name="Keenan S."/>
            <person name="Kershaw J.K."/>
            <person name="Kimberley A.M."/>
            <person name="King A."/>
            <person name="Knights A."/>
            <person name="Laird G.K."/>
            <person name="Langford C."/>
            <person name="Lawlor S."/>
            <person name="Leongamornlert D.A."/>
            <person name="Leversha M."/>
            <person name="Lloyd C."/>
            <person name="Lloyd D.M."/>
            <person name="Lovell J."/>
            <person name="Martin S."/>
            <person name="Mashreghi-Mohammadi M."/>
            <person name="Matthews L."/>
            <person name="McLaren S."/>
            <person name="McLay K.E."/>
            <person name="McMurray A."/>
            <person name="Milne S."/>
            <person name="Nickerson T."/>
            <person name="Nisbett J."/>
            <person name="Nordsiek G."/>
            <person name="Pearce A.V."/>
            <person name="Peck A.I."/>
            <person name="Porter K.M."/>
            <person name="Pandian R."/>
            <person name="Pelan S."/>
            <person name="Phillimore B."/>
            <person name="Povey S."/>
            <person name="Ramsey Y."/>
            <person name="Rand V."/>
            <person name="Scharfe M."/>
            <person name="Sehra H.K."/>
            <person name="Shownkeen R."/>
            <person name="Sims S.K."/>
            <person name="Skuce C.D."/>
            <person name="Smith M."/>
            <person name="Steward C.A."/>
            <person name="Swarbreck D."/>
            <person name="Sycamore N."/>
            <person name="Tester J."/>
            <person name="Thorpe A."/>
            <person name="Tracey A."/>
            <person name="Tromans A."/>
            <person name="Thomas D.W."/>
            <person name="Wall M."/>
            <person name="Wallis J.M."/>
            <person name="West A.P."/>
            <person name="Whitehead S.L."/>
            <person name="Willey D.L."/>
            <person name="Williams S.A."/>
            <person name="Wilming L."/>
            <person name="Wray P.W."/>
            <person name="Young L."/>
            <person name="Ashurst J.L."/>
            <person name="Coulson A."/>
            <person name="Blocker H."/>
            <person name="Durbin R.M."/>
            <person name="Sulston J.E."/>
            <person name="Hubbard T."/>
            <person name="Jackson M.J."/>
            <person name="Bentley D.R."/>
            <person name="Beck S."/>
            <person name="Rogers J."/>
            <person name="Dunham I."/>
        </authorList>
    </citation>
    <scope>NUCLEOTIDE SEQUENCE [LARGE SCALE GENOMIC DNA]</scope>
</reference>
<reference key="5">
    <citation type="submission" date="2005-07" db="EMBL/GenBank/DDBJ databases">
        <authorList>
            <person name="Mural R.J."/>
            <person name="Istrail S."/>
            <person name="Sutton G."/>
            <person name="Florea L."/>
            <person name="Halpern A.L."/>
            <person name="Mobarry C.M."/>
            <person name="Lippert R."/>
            <person name="Walenz B."/>
            <person name="Shatkay H."/>
            <person name="Dew I."/>
            <person name="Miller J.R."/>
            <person name="Flanigan M.J."/>
            <person name="Edwards N.J."/>
            <person name="Bolanos R."/>
            <person name="Fasulo D."/>
            <person name="Halldorsson B.V."/>
            <person name="Hannenhalli S."/>
            <person name="Turner R."/>
            <person name="Yooseph S."/>
            <person name="Lu F."/>
            <person name="Nusskern D.R."/>
            <person name="Shue B.C."/>
            <person name="Zheng X.H."/>
            <person name="Zhong F."/>
            <person name="Delcher A.L."/>
            <person name="Huson D.H."/>
            <person name="Kravitz S.A."/>
            <person name="Mouchard L."/>
            <person name="Reinert K."/>
            <person name="Remington K.A."/>
            <person name="Clark A.G."/>
            <person name="Waterman M.S."/>
            <person name="Eichler E.E."/>
            <person name="Adams M.D."/>
            <person name="Hunkapiller M.W."/>
            <person name="Myers E.W."/>
            <person name="Venter J.C."/>
        </authorList>
    </citation>
    <scope>NUCLEOTIDE SEQUENCE [LARGE SCALE GENOMIC DNA]</scope>
</reference>
<reference key="6">
    <citation type="journal article" date="2004" name="Genome Res.">
        <title>The status, quality, and expansion of the NIH full-length cDNA project: the Mammalian Gene Collection (MGC).</title>
        <authorList>
            <consortium name="The MGC Project Team"/>
        </authorList>
    </citation>
    <scope>NUCLEOTIDE SEQUENCE [LARGE SCALE MRNA] (ISOFORM 1)</scope>
    <source>
        <tissue>Kidney</tissue>
        <tissue>Lymph</tissue>
        <tissue>Ovary</tissue>
    </source>
</reference>
<reference key="7">
    <citation type="journal article" date="2002" name="Proteomics">
        <title>Cluster analysis of an extensive human breast cancer cell line protein expression map database.</title>
        <authorList>
            <person name="Harris R.A."/>
            <person name="Yang A."/>
            <person name="Stein R.C."/>
            <person name="Lucy K."/>
            <person name="Brusten L."/>
            <person name="Herath A."/>
            <person name="Parekh R."/>
            <person name="Waterfield M.D."/>
            <person name="O'Hare M.J."/>
            <person name="Neville M.A."/>
            <person name="Page M.J."/>
            <person name="Zvelebil M.J."/>
        </authorList>
    </citation>
    <scope>MASS SPECTROMETRY</scope>
    <source>
        <tissue>Mammary cancer</tissue>
    </source>
</reference>
<reference key="8">
    <citation type="journal article" date="2009" name="Science">
        <title>Lysine acetylation targets protein complexes and co-regulates major cellular functions.</title>
        <authorList>
            <person name="Choudhary C."/>
            <person name="Kumar C."/>
            <person name="Gnad F."/>
            <person name="Nielsen M.L."/>
            <person name="Rehman M."/>
            <person name="Walther T.C."/>
            <person name="Olsen J.V."/>
            <person name="Mann M."/>
        </authorList>
    </citation>
    <scope>ACETYLATION [LARGE SCALE ANALYSIS] AT LYS-299</scope>
    <scope>IDENTIFICATION BY MASS SPECTROMETRY [LARGE SCALE ANALYSIS]</scope>
</reference>
<reference key="9">
    <citation type="journal article" date="2011" name="BMC Syst. Biol.">
        <title>Initial characterization of the human central proteome.</title>
        <authorList>
            <person name="Burkard T.R."/>
            <person name="Planyavsky M."/>
            <person name="Kaupe I."/>
            <person name="Breitwieser F.P."/>
            <person name="Buerckstuemmer T."/>
            <person name="Bennett K.L."/>
            <person name="Superti-Furga G."/>
            <person name="Colinge J."/>
        </authorList>
    </citation>
    <scope>IDENTIFICATION BY MASS SPECTROMETRY [LARGE SCALE ANALYSIS]</scope>
</reference>
<reference key="10">
    <citation type="journal article" date="2015" name="Brain">
        <title>PMPCA mutations cause abnormal mitochondrial protein processing in patients with non-progressive cerebellar ataxia.</title>
        <authorList>
            <person name="Jobling R.K."/>
            <person name="Assoum M."/>
            <person name="Gakh O."/>
            <person name="Blaser S."/>
            <person name="Raiman J.A."/>
            <person name="Mignot C."/>
            <person name="Roze E."/>
            <person name="Duerr A."/>
            <person name="Brice A."/>
            <person name="Levy N."/>
            <person name="Prasad C."/>
            <person name="Paton T."/>
            <person name="Paterson A.D."/>
            <person name="Roslin N.M."/>
            <person name="Marshall C.R."/>
            <person name="Desvignes J.P."/>
            <person name="Roeckel-Trevisiol N."/>
            <person name="Scherer S.W."/>
            <person name="Rouleau G.A."/>
            <person name="Megarbane A."/>
            <person name="Isaya G."/>
            <person name="Delague V."/>
            <person name="Yoon G."/>
        </authorList>
    </citation>
    <scope>INVOLVEMENT IN SCAR2</scope>
    <scope>VARIANTS SCAR2 LEU-96; THR-377 AND ARG-515</scope>
    <scope>FUNCTION</scope>
    <scope>CHARACTERIZATION OF VARIANT SCAR2 THR-377</scope>
    <scope>TISSUE SPECIFICITY</scope>
    <scope>SUBCELLULAR LOCATION</scope>
</reference>
<reference key="11">
    <citation type="journal article" date="2015" name="Proteomics">
        <title>N-terminome analysis of the human mitochondrial proteome.</title>
        <authorList>
            <person name="Vaca Jacome A.S."/>
            <person name="Rabilloud T."/>
            <person name="Schaeffer-Reiss C."/>
            <person name="Rompais M."/>
            <person name="Ayoub D."/>
            <person name="Lane L."/>
            <person name="Bairoch A."/>
            <person name="Van Dorsselaer A."/>
            <person name="Carapito C."/>
        </authorList>
    </citation>
    <scope>CLEAVAGE OF TRANSIT PEPTIDE [LARGE SCALE ANALYSIS] AFTER PHE-33</scope>
    <scope>IDENTIFICATION BY MASS SPECTROMETRY [LARGE SCALE ANALYSIS]</scope>
</reference>
<reference key="12">
    <citation type="journal article" date="2016" name="Brain">
        <title>Autosomal recessive cerebellar ataxia caused by a homozygous mutation in PMPCA.</title>
        <authorList>
            <consortium name="Care4Rare Consortium"/>
            <person name="Choquet K."/>
            <person name="Zurita-Rendon O."/>
            <person name="La Piana R."/>
            <person name="Yang S."/>
            <person name="Dicaire M.J."/>
            <person name="Boycott K.M."/>
            <person name="Majewski J."/>
            <person name="Shoubridge E.A."/>
            <person name="Brais B."/>
            <person name="Tetreault M."/>
        </authorList>
    </citation>
    <scope>VARIANT SCAR2 MET-256</scope>
</reference>
<organism>
    <name type="scientific">Homo sapiens</name>
    <name type="common">Human</name>
    <dbReference type="NCBI Taxonomy" id="9606"/>
    <lineage>
        <taxon>Eukaryota</taxon>
        <taxon>Metazoa</taxon>
        <taxon>Chordata</taxon>
        <taxon>Craniata</taxon>
        <taxon>Vertebrata</taxon>
        <taxon>Euteleostomi</taxon>
        <taxon>Mammalia</taxon>
        <taxon>Eutheria</taxon>
        <taxon>Euarchontoglires</taxon>
        <taxon>Primates</taxon>
        <taxon>Haplorrhini</taxon>
        <taxon>Catarrhini</taxon>
        <taxon>Hominidae</taxon>
        <taxon>Homo</taxon>
    </lineage>
</organism>
<comment type="function">
    <text evidence="5">Substrate recognition and binding subunit of the essential mitochondrial processing protease (MPP), which cleaves the mitochondrial sequence off newly imported precursors proteins.</text>
</comment>
<comment type="subunit">
    <text evidence="1">Heterodimer of PMPCA (alpha) and PMPCB (beta) subunits, forming the mitochondrial processing protease (MPP) in which PMPCA is involved in substrate recognition and binding and PMPCB is the catalytic subunit.</text>
</comment>
<comment type="interaction">
    <interactant intactId="EBI-2514696">
        <id>Q10713</id>
    </interactant>
    <interactant intactId="EBI-932603">
        <id>Q02539</id>
        <label>H1-1</label>
    </interactant>
    <organismsDiffer>false</organismsDiffer>
    <experiments>2</experiments>
</comment>
<comment type="interaction">
    <interactant intactId="EBI-2514696">
        <id>Q10713</id>
    </interactant>
    <interactant intactId="EBI-7254550">
        <id>P36508</id>
        <label>ZNF76</label>
    </interactant>
    <organismsDiffer>false</organismsDiffer>
    <experiments>3</experiments>
</comment>
<comment type="subcellular location">
    <subcellularLocation>
        <location evidence="2">Mitochondrion matrix</location>
    </subcellularLocation>
    <subcellularLocation>
        <location evidence="5">Mitochondrion inner membrane</location>
    </subcellularLocation>
</comment>
<comment type="alternative products">
    <event type="alternative splicing"/>
    <isoform>
        <id>Q10713-1</id>
        <name>1</name>
        <sequence type="displayed"/>
    </isoform>
    <isoform>
        <id>Q10713-2</id>
        <name>2</name>
        <sequence type="described" ref="VSP_054916 VSP_054917"/>
    </isoform>
</comment>
<comment type="tissue specificity">
    <text evidence="5">Ubiquitously expressed with highest expression in fetal tissues and adult brain, cerebellum and cerebellar vermis.</text>
</comment>
<comment type="mass spectrometry"/>
<comment type="disease" evidence="5 6">
    <disease id="DI-04657">
        <name>Spinocerebellar ataxia, autosomal recessive, 2</name>
        <acronym>SCAR2</acronym>
        <description>A form of spinocerebellar ataxia, a clinically and genetically heterogeneous group of cerebellar disorders due to degeneration of the cerebellum with variable involvement of the brainstem and spinal cord. SCAR2 is characterized by onset of impaired motor development and ataxic gait in early childhood. Additional features often include loss of fine motor skills, dysarthria, nystagmus, cerebellar signs, and delayed cognitive development with intellectual disability.</description>
        <dbReference type="MIM" id="213200"/>
    </disease>
    <text>The disease is caused by variants affecting the gene represented in this entry.</text>
</comment>
<comment type="similarity">
    <text evidence="8">Belongs to the peptidase M16 family.</text>
</comment>
<comment type="caution">
    <text evidence="8">Does not seem to have protease activity as it lacks the zinc-binding site.</text>
</comment>
<comment type="sequence caution" evidence="8">
    <conflict type="erroneous initiation">
        <sequence resource="EMBL-CDS" id="AAH33103"/>
    </conflict>
</comment>
<comment type="sequence caution" evidence="8">
    <conflict type="erroneous initiation">
        <sequence resource="EMBL-CDS" id="BAA04643"/>
    </conflict>
</comment>
<comment type="sequence caution" evidence="8">
    <conflict type="erroneous initiation">
        <sequence resource="EMBL-CDS" id="BAA09472"/>
    </conflict>
</comment>
<evidence type="ECO:0000250" key="1">
    <source>
        <dbReference type="UniProtKB" id="P11914"/>
    </source>
</evidence>
<evidence type="ECO:0000250" key="2">
    <source>
        <dbReference type="UniProtKB" id="P20069"/>
    </source>
</evidence>
<evidence type="ECO:0000250" key="3">
    <source>
        <dbReference type="UniProtKB" id="Q9DC61"/>
    </source>
</evidence>
<evidence type="ECO:0000269" key="4">
    <source>
    </source>
</evidence>
<evidence type="ECO:0000269" key="5">
    <source>
    </source>
</evidence>
<evidence type="ECO:0000269" key="6">
    <source>
    </source>
</evidence>
<evidence type="ECO:0000303" key="7">
    <source>
    </source>
</evidence>
<evidence type="ECO:0000305" key="8"/>
<evidence type="ECO:0007744" key="9">
    <source>
    </source>
</evidence>
<evidence type="ECO:0007744" key="10">
    <source>
    </source>
</evidence>
<name>MPPA_HUMAN</name>
<feature type="transit peptide" description="Mitochondrion" evidence="10">
    <location>
        <begin position="1"/>
        <end position="33"/>
    </location>
</feature>
<feature type="chain" id="PRO_0000026767" description="Mitochondrial-processing peptidase subunit alpha">
    <location>
        <begin position="34"/>
        <end position="525"/>
    </location>
</feature>
<feature type="modified residue" description="N6-succinyllysine" evidence="3">
    <location>
        <position position="64"/>
    </location>
</feature>
<feature type="modified residue" description="N6-acetyllysine" evidence="9">
    <location>
        <position position="299"/>
    </location>
</feature>
<feature type="splice variant" id="VSP_054916" description="In isoform 2." evidence="7">
    <original>MAAVVLAATRLLRGSGSWGCSRLRFGPPAYRRFSSGGAYPNIPLSS</original>
    <variation>MKRNTLVELLTFWKNWHFRLLLDLTAKMKFCLRWKSMGVSVTARHQ</variation>
    <location>
        <begin position="1"/>
        <end position="46"/>
    </location>
</feature>
<feature type="splice variant" id="VSP_054917" description="In isoform 2." evidence="7">
    <location>
        <begin position="47"/>
        <end position="177"/>
    </location>
</feature>
<feature type="sequence variant" id="VAR_076237" description="In SCAR2; dbSNP:rs869025292." evidence="5">
    <original>S</original>
    <variation>L</variation>
    <location>
        <position position="96"/>
    </location>
</feature>
<feature type="sequence variant" id="VAR_076238" description="In SCAR2; dbSNP:rs746549806." evidence="6">
    <original>V</original>
    <variation>M</variation>
    <location>
        <position position="256"/>
    </location>
</feature>
<feature type="sequence variant" id="VAR_076239" description="In SCAR2; impairs cleavage of FXN; does not impair cleavage of DLD, NFS1 and PRDX3; dbSNP:rs753611141." evidence="5">
    <original>A</original>
    <variation>T</variation>
    <location>
        <position position="377"/>
    </location>
</feature>
<feature type="sequence variant" id="VAR_076240" description="In SCAR2; dbSNP:rs869025293." evidence="5">
    <original>G</original>
    <variation>R</variation>
    <location>
        <position position="515"/>
    </location>
</feature>
<feature type="sequence conflict" description="In Ref. 6; AAH22949." evidence="8" ref="6">
    <original>G</original>
    <variation>C</variation>
    <location>
        <position position="495"/>
    </location>
</feature>
<feature type="sequence conflict" description="In Ref. 1; BAA04643." evidence="8" ref="1">
    <original>H</original>
    <variation>D</variation>
    <location>
        <position position="505"/>
    </location>
</feature>
<accession>Q10713</accession>
<accession>B4DKL3</accession>
<accession>E7ET61</accession>
<accession>Q16639</accession>
<accession>Q5SXM9</accession>
<accession>Q8N513</accession>